<proteinExistence type="inferred from homology"/>
<name>RDRP_TBRFV</name>
<feature type="chain" id="PRO_0000448837" description="Replicase large subunit">
    <location>
        <begin position="1"/>
        <end position="1615"/>
    </location>
</feature>
<feature type="chain" id="PRO_0000448838" description="Replicase small subunit" evidence="1">
    <location>
        <begin position="1"/>
        <end position="1116"/>
    </location>
</feature>
<feature type="domain" description="Alphavirus-like MT" evidence="4">
    <location>
        <begin position="72"/>
        <end position="281"/>
    </location>
</feature>
<feature type="domain" description="(+)RNA virus helicase ATP-binding" evidence="3">
    <location>
        <begin position="801"/>
        <end position="963"/>
    </location>
</feature>
<feature type="domain" description="(+)RNA virus helicase C-terminal" evidence="3">
    <location>
        <begin position="964"/>
        <end position="1116"/>
    </location>
</feature>
<feature type="domain" description="RdRp catalytic" evidence="2">
    <location>
        <begin position="1380"/>
        <end position="1493"/>
    </location>
</feature>
<feature type="binding site" evidence="3">
    <location>
        <begin position="833"/>
        <end position="840"/>
    </location>
    <ligand>
        <name>a ribonucleoside 5'-triphosphate</name>
        <dbReference type="ChEBI" id="CHEBI:61557"/>
    </ligand>
</feature>
<dbReference type="EC" id="2.1.1.-"/>
<dbReference type="EC" id="2.7.7.-"/>
<dbReference type="EC" id="2.7.7.48"/>
<dbReference type="EC" id="3.6.4.13"/>
<dbReference type="EMBL" id="KT383474">
    <property type="protein sequence ID" value="ALP48477.1"/>
    <property type="molecule type" value="Genomic_RNA"/>
</dbReference>
<dbReference type="EMBL" id="KT383474">
    <property type="protein sequence ID" value="ALP48476.1"/>
    <property type="molecule type" value="Genomic_RNA"/>
</dbReference>
<dbReference type="RefSeq" id="YP_009182168.1">
    <property type="nucleotide sequence ID" value="NC_028478.1"/>
</dbReference>
<dbReference type="RefSeq" id="YP_009182169.1">
    <property type="nucleotide sequence ID" value="NC_028478.1"/>
</dbReference>
<dbReference type="GeneID" id="26373865"/>
<dbReference type="GeneID" id="26373868"/>
<dbReference type="KEGG" id="vg:26373865"/>
<dbReference type="KEGG" id="vg:26373868"/>
<dbReference type="Proteomes" id="UP000203541">
    <property type="component" value="Segment"/>
</dbReference>
<dbReference type="GO" id="GO:0005524">
    <property type="term" value="F:ATP binding"/>
    <property type="evidence" value="ECO:0007669"/>
    <property type="project" value="UniProtKB-KW"/>
</dbReference>
<dbReference type="GO" id="GO:0016887">
    <property type="term" value="F:ATP hydrolysis activity"/>
    <property type="evidence" value="ECO:0007669"/>
    <property type="project" value="RHEA"/>
</dbReference>
<dbReference type="GO" id="GO:0008174">
    <property type="term" value="F:mRNA methyltransferase activity"/>
    <property type="evidence" value="ECO:0007669"/>
    <property type="project" value="InterPro"/>
</dbReference>
<dbReference type="GO" id="GO:0003723">
    <property type="term" value="F:RNA binding"/>
    <property type="evidence" value="ECO:0007669"/>
    <property type="project" value="InterPro"/>
</dbReference>
<dbReference type="GO" id="GO:0003724">
    <property type="term" value="F:RNA helicase activity"/>
    <property type="evidence" value="ECO:0007669"/>
    <property type="project" value="UniProtKB-EC"/>
</dbReference>
<dbReference type="GO" id="GO:0003968">
    <property type="term" value="F:RNA-directed RNA polymerase activity"/>
    <property type="evidence" value="ECO:0007669"/>
    <property type="project" value="UniProtKB-KW"/>
</dbReference>
<dbReference type="GO" id="GO:0006351">
    <property type="term" value="P:DNA-templated transcription"/>
    <property type="evidence" value="ECO:0007669"/>
    <property type="project" value="InterPro"/>
</dbReference>
<dbReference type="GO" id="GO:0016556">
    <property type="term" value="P:mRNA modification"/>
    <property type="evidence" value="ECO:0007669"/>
    <property type="project" value="InterPro"/>
</dbReference>
<dbReference type="GO" id="GO:0006396">
    <property type="term" value="P:RNA processing"/>
    <property type="evidence" value="ECO:0007669"/>
    <property type="project" value="InterPro"/>
</dbReference>
<dbReference type="GO" id="GO:0052170">
    <property type="term" value="P:symbiont-mediated suppression of host innate immune response"/>
    <property type="evidence" value="ECO:0007669"/>
    <property type="project" value="UniProtKB-KW"/>
</dbReference>
<dbReference type="GO" id="GO:0039694">
    <property type="term" value="P:viral RNA genome replication"/>
    <property type="evidence" value="ECO:0007669"/>
    <property type="project" value="InterPro"/>
</dbReference>
<dbReference type="CDD" id="cd23251">
    <property type="entry name" value="Virgaviridae_RdRp"/>
    <property type="match status" value="1"/>
</dbReference>
<dbReference type="Gene3D" id="3.30.450.420">
    <property type="match status" value="1"/>
</dbReference>
<dbReference type="Gene3D" id="3.40.50.300">
    <property type="entry name" value="P-loop containing nucleotide triphosphate hydrolases"/>
    <property type="match status" value="2"/>
</dbReference>
<dbReference type="InterPro" id="IPR027351">
    <property type="entry name" value="(+)RNA_virus_helicase_core_dom"/>
</dbReference>
<dbReference type="InterPro" id="IPR002588">
    <property type="entry name" value="Alphavirus-like_MT_dom"/>
</dbReference>
<dbReference type="InterPro" id="IPR043502">
    <property type="entry name" value="DNA/RNA_pol_sf"/>
</dbReference>
<dbReference type="InterPro" id="IPR027417">
    <property type="entry name" value="P-loop_NTPase"/>
</dbReference>
<dbReference type="InterPro" id="IPR001788">
    <property type="entry name" value="RNA-dep_RNA_pol_alsuvir"/>
</dbReference>
<dbReference type="InterPro" id="IPR007094">
    <property type="entry name" value="RNA-dir_pol_PSvirus"/>
</dbReference>
<dbReference type="InterPro" id="IPR047310">
    <property type="entry name" value="Virgaviridae_RdRp"/>
</dbReference>
<dbReference type="Pfam" id="PF00978">
    <property type="entry name" value="RdRP_2"/>
    <property type="match status" value="1"/>
</dbReference>
<dbReference type="Pfam" id="PF01443">
    <property type="entry name" value="Viral_helicase1"/>
    <property type="match status" value="1"/>
</dbReference>
<dbReference type="Pfam" id="PF01660">
    <property type="entry name" value="Vmethyltransf"/>
    <property type="match status" value="1"/>
</dbReference>
<dbReference type="SUPFAM" id="SSF56672">
    <property type="entry name" value="DNA/RNA polymerases"/>
    <property type="match status" value="1"/>
</dbReference>
<dbReference type="SUPFAM" id="SSF52540">
    <property type="entry name" value="P-loop containing nucleoside triphosphate hydrolases"/>
    <property type="match status" value="1"/>
</dbReference>
<dbReference type="PROSITE" id="PS51743">
    <property type="entry name" value="ALPHAVIRUS_MT"/>
    <property type="match status" value="1"/>
</dbReference>
<dbReference type="PROSITE" id="PS51657">
    <property type="entry name" value="PSRV_HELICASE"/>
    <property type="match status" value="1"/>
</dbReference>
<dbReference type="PROSITE" id="PS50507">
    <property type="entry name" value="RDRP_SSRNA_POS"/>
    <property type="match status" value="1"/>
</dbReference>
<organismHost>
    <name type="scientific">Solanum lycopersicum</name>
    <name type="common">Tomato</name>
    <name type="synonym">Lycopersicon esculentum</name>
    <dbReference type="NCBI Taxonomy" id="4081"/>
</organismHost>
<protein>
    <recommendedName>
        <fullName>Replicase large subunit</fullName>
        <ecNumber>2.1.1.-</ecNumber>
        <ecNumber>2.7.7.-</ecNumber>
        <ecNumber>2.7.7.48</ecNumber>
        <ecNumber>3.6.4.13</ecNumber>
    </recommendedName>
    <alternativeName>
        <fullName>183 kDa protein</fullName>
    </alternativeName>
    <alternativeName>
        <fullName>RNA-directed RNA polymerase</fullName>
    </alternativeName>
    <component>
        <recommendedName>
            <fullName>Replicase small subunit</fullName>
            <ecNumber>2.1.1.-</ecNumber>
            <ecNumber>2.7.7.-</ecNumber>
            <ecNumber>3.6.4.13</ecNumber>
        </recommendedName>
        <alternativeName>
            <fullName>126 kDa protein</fullName>
        </alternativeName>
        <alternativeName>
            <fullName>Methyltransferase/RNA helicase</fullName>
            <shortName>MT/HEL</shortName>
        </alternativeName>
    </component>
</protein>
<organism>
    <name type="scientific">Tomato brown rugose fruit virus (isolate TOBRFV/Tomato/Jordan/Tom1-Jo/2015)</name>
    <name type="common">ToBRFV</name>
    <dbReference type="NCBI Taxonomy" id="2654645"/>
    <lineage>
        <taxon>Viruses</taxon>
        <taxon>Riboviria</taxon>
        <taxon>Orthornavirae</taxon>
        <taxon>Kitrinoviricota</taxon>
        <taxon>Alsuviricetes</taxon>
        <taxon>Martellivirales</taxon>
        <taxon>Virgaviridae</taxon>
        <taxon>Tobamovirus</taxon>
        <taxon>Tomato brown rugose fruit virus</taxon>
    </lineage>
</organism>
<accession>A0A0S2T050</accession>
<accession>A0A0S2T034</accession>
<reference key="1">
    <citation type="journal article" date="2016" name="Arch. Virol.">
        <title>A new tobamovirus infecting tomato crops in Jordan.</title>
        <authorList>
            <person name="Salem N."/>
            <person name="Mansour A."/>
            <person name="Ciuffo M."/>
            <person name="Falk B.W."/>
            <person name="Turina M."/>
        </authorList>
    </citation>
    <scope>NUCLEOTIDE SEQUENCE [LARGE SCALE GENOMIC DNA]</scope>
</reference>
<comment type="function">
    <molecule>Replicase large subunit</molecule>
    <text evidence="1">Is an RNA-dependent RNA polymerase active in viral RNA replication.</text>
</comment>
<comment type="function">
    <molecule>Replicase small subunit</molecule>
    <text evidence="1">Is a methyltransferase active in RNA capping and an RNA helicase. Methyltransferase displays a cytoplasmic capping enzyme activity. This function is necessary since all viral RNAs are synthesized in the cytoplasm, and host capping enzymes are restricted to the nucleus. Helicase region probably exhibits NTPase and RNA unwinding activities. It also acts as a suppressor of RNA-mediated gene silencing, also known as post-transcriptional gene silencing (PTGS), a mechanism of plant viral defense that limits the accumulation of viral RNAs. May mediate silencing suppression through either inhibition of HEN1-mediated siRNA or siRNA demethylation.</text>
</comment>
<comment type="catalytic activity">
    <reaction evidence="2">
        <text>RNA(n) + a ribonucleoside 5'-triphosphate = RNA(n+1) + diphosphate</text>
        <dbReference type="Rhea" id="RHEA:21248"/>
        <dbReference type="Rhea" id="RHEA-COMP:14527"/>
        <dbReference type="Rhea" id="RHEA-COMP:17342"/>
        <dbReference type="ChEBI" id="CHEBI:33019"/>
        <dbReference type="ChEBI" id="CHEBI:61557"/>
        <dbReference type="ChEBI" id="CHEBI:140395"/>
        <dbReference type="EC" id="2.7.7.48"/>
    </reaction>
</comment>
<comment type="catalytic activity">
    <reaction evidence="1">
        <text>ATP + H2O = ADP + phosphate + H(+)</text>
        <dbReference type="Rhea" id="RHEA:13065"/>
        <dbReference type="ChEBI" id="CHEBI:15377"/>
        <dbReference type="ChEBI" id="CHEBI:15378"/>
        <dbReference type="ChEBI" id="CHEBI:30616"/>
        <dbReference type="ChEBI" id="CHEBI:43474"/>
        <dbReference type="ChEBI" id="CHEBI:456216"/>
        <dbReference type="EC" id="3.6.4.13"/>
    </reaction>
</comment>
<comment type="subunit">
    <text evidence="1">Heterodimer of a large and a small subunit.</text>
</comment>
<comment type="miscellaneous">
    <text evidence="1">This protein is translated as a fusion protein by episodic readthrough of a termination codon. When readthrough of the terminator codon TGA occurs between the codons for Gln-1116 and Gln-1118, this results in the addition of the RdRp region to the replicase.</text>
</comment>
<comment type="similarity">
    <text evidence="5">Belongs to the ssRNA positive-strand viruses RNA-directed RNA polymerase family.</text>
</comment>
<sequence>MAYTQTATTSALLDTVRGNNTLVNDLAKRRLYDTAVDEFNARDRRPKVNFSKVISEEQTLIATRAYPEFQITFYNTQNAVHSLAGGLRSLELEYLMMQIPYGSLTYDIGGNFASHLFKGRAYVHCCMPNLDVRDIMRHEGQKDSIELYLSRLERGNKVVPNFQKEAFDRYAETPDEVVCHSTFQTCTHQQVENTGRVYAIALHSIYDIPADEFGAALLRKNVHVCYAAFHFSENLLLEDSHVNLDEINACFSRDGDKLTFSFASESTLNYCHSYSNILKYVCKTYFPASNREVYMKEFLVTRVNTWFCKFSRIDTFLLYKGVAHKGVNSEQFYSAMEDAWHYKKTLAMCNSERILLEDSSSVNYWFPKMRDMVIVPLFDISLDTSKRTRKEVLVSKDFVFTVLNHIRTYQAKALTYSNVLSFVESIRSRVIINGVTARSEWDVDKSLLQSLSMTFFLHTKLAVLKDELLISKFSLGPKSVSQHVWDEISLAFGNAFPSIKERLLNRKLIKVSGDALEIRVPDLYVTFHDRLVTEYKTSVDMPVLDIRKRMEETEVMYNALSELSVLKESDKFDVDVFSRMCQTLEVDPMTAAKVIVAVMSNESGLTLTFEQPTEANVALALKDSEKASEGALVVTSRDVEEPSMKGSMARGELQLAGLSGDQPESSYTRNEEIESLEQFHMATASSLIRKQMSSIVYTGPIKVQQMKNFIDSLVASLSAAVSNLVKILKDTAAIDLETRQKFGVLDVATKRWLIKPLAKNHAWGVIETHARKYHVALLEYDEHGVVTCDSWRRVAVSSESMVYSDMAKLRTLRRLLRDGEPHVSSAKVVLVDGVPGCGKTKEILSKVNFEEDLILVPGKQAAEMIKRRANASGIIQATRDNVRTVDSFIMNYGKGTRCQFKRLFIDEGLMLHTGCVNFLVSMSLCEIAYVYGDTQQIPYINRVSGFPYPAHFAKIEVDEVETRRTTLRCPADITHYLNRRYEGYVMCTSSVKKSVSQEMVSGAAMINPVSKPLNGKVLTFTQSDKEALLSRGYTDVHTVHEVQGETYADVSLVRLTPTPVSIIAGDSPHVLVALSRHTQTLKYYTVVMDPLVSIIRDLEKLSSYLLDMYKVDAGTQXQLQVDSVFKGSNLFVAAPKTGDISDMQFYYDKCLPGNSTMLNNYDAVTMRLTDISLNVKDCILDFSKSVAAPKDPIKPLIPMVRTAAEMPRQTGLLENLVAMIKRNFNSPELSGIIDIENTASLVVDKFFDSYLLKEKRKPNKNVSLFCRESLNRWLEKQEQVTIGQLADFDFVDLPAVDQYRHMIKAQPKQKLDTSIQSEYPALQTIVYHSKKINAIFGPLFSELTRQMLESIDSSKFLFFTRKTPAQIEDFFGDLDSHVPMDILELDISKYDKSQNEFHCAVEYEIWRRLGLEDFLGEVWKQGHRKTTLKDYTAGIKTCLWYQRKSGDVTTFIGNTVIIAACLASMLPMEKIIKGAFCGDDSLLYFPKGCEFPDIQHTANLMWNFEAKLFRKQYGYFCGRYVIHHDRGCIVYYDPLKLISKLGAKHIKDWDHLEEFRRSLCDVANSLNNCAYYTQLDDAVSEVHKTAPPGSFVYKSLVKYLSDKVLFRSLFIDGSC</sequence>
<keyword id="KW-0067">ATP-binding</keyword>
<keyword id="KW-0347">Helicase</keyword>
<keyword id="KW-0945">Host-virus interaction</keyword>
<keyword id="KW-0378">Hydrolase</keyword>
<keyword id="KW-1090">Inhibition of host innate immune response by virus</keyword>
<keyword id="KW-0547">Nucleotide-binding</keyword>
<keyword id="KW-0548">Nucleotidyltransferase</keyword>
<keyword id="KW-0696">RNA-directed RNA polymerase</keyword>
<keyword id="KW-0941">Suppressor of RNA silencing</keyword>
<keyword id="KW-0808">Transferase</keyword>
<keyword id="KW-0899">Viral immunoevasion</keyword>
<keyword id="KW-0693">Viral RNA replication</keyword>
<evidence type="ECO:0000250" key="1">
    <source>
        <dbReference type="UniProtKB" id="P03586"/>
    </source>
</evidence>
<evidence type="ECO:0000255" key="2">
    <source>
        <dbReference type="PROSITE-ProRule" id="PRU00539"/>
    </source>
</evidence>
<evidence type="ECO:0000255" key="3">
    <source>
        <dbReference type="PROSITE-ProRule" id="PRU00990"/>
    </source>
</evidence>
<evidence type="ECO:0000255" key="4">
    <source>
        <dbReference type="PROSITE-ProRule" id="PRU01079"/>
    </source>
</evidence>
<evidence type="ECO:0000305" key="5"/>